<feature type="chain" id="PRO_0000364898" description="Ferredoxin--NADP reductase">
    <location>
        <begin position="1"/>
        <end position="366"/>
    </location>
</feature>
<feature type="binding site" evidence="1">
    <location>
        <position position="51"/>
    </location>
    <ligand>
        <name>FAD</name>
        <dbReference type="ChEBI" id="CHEBI:57692"/>
    </ligand>
</feature>
<feature type="binding site" evidence="1">
    <location>
        <position position="59"/>
    </location>
    <ligand>
        <name>FAD</name>
        <dbReference type="ChEBI" id="CHEBI:57692"/>
    </ligand>
</feature>
<feature type="binding site" evidence="1">
    <location>
        <position position="64"/>
    </location>
    <ligand>
        <name>FAD</name>
        <dbReference type="ChEBI" id="CHEBI:57692"/>
    </ligand>
</feature>
<feature type="binding site" evidence="1">
    <location>
        <position position="104"/>
    </location>
    <ligand>
        <name>FAD</name>
        <dbReference type="ChEBI" id="CHEBI:57692"/>
    </ligand>
</feature>
<feature type="binding site" evidence="1">
    <location>
        <position position="139"/>
    </location>
    <ligand>
        <name>FAD</name>
        <dbReference type="ChEBI" id="CHEBI:57692"/>
    </ligand>
</feature>
<feature type="binding site" evidence="1">
    <location>
        <position position="308"/>
    </location>
    <ligand>
        <name>FAD</name>
        <dbReference type="ChEBI" id="CHEBI:57692"/>
    </ligand>
</feature>
<feature type="binding site" evidence="1">
    <location>
        <position position="349"/>
    </location>
    <ligand>
        <name>FAD</name>
        <dbReference type="ChEBI" id="CHEBI:57692"/>
    </ligand>
</feature>
<keyword id="KW-0274">FAD</keyword>
<keyword id="KW-0285">Flavoprotein</keyword>
<keyword id="KW-0521">NADP</keyword>
<keyword id="KW-0560">Oxidoreductase</keyword>
<keyword id="KW-1185">Reference proteome</keyword>
<dbReference type="EC" id="1.18.1.2" evidence="1"/>
<dbReference type="EMBL" id="CP000529">
    <property type="protein sequence ID" value="ABM37740.1"/>
    <property type="molecule type" value="Genomic_DNA"/>
</dbReference>
<dbReference type="RefSeq" id="WP_011801818.1">
    <property type="nucleotide sequence ID" value="NC_008781.1"/>
</dbReference>
<dbReference type="SMR" id="A1VQ12"/>
<dbReference type="STRING" id="365044.Pnap_2433"/>
<dbReference type="KEGG" id="pna:Pnap_2433"/>
<dbReference type="eggNOG" id="COG0492">
    <property type="taxonomic scope" value="Bacteria"/>
</dbReference>
<dbReference type="HOGENOM" id="CLU_031864_5_5_4"/>
<dbReference type="OrthoDB" id="9806179at2"/>
<dbReference type="Proteomes" id="UP000000644">
    <property type="component" value="Chromosome"/>
</dbReference>
<dbReference type="GO" id="GO:0004324">
    <property type="term" value="F:ferredoxin-NADP+ reductase activity"/>
    <property type="evidence" value="ECO:0007669"/>
    <property type="project" value="UniProtKB-UniRule"/>
</dbReference>
<dbReference type="GO" id="GO:0050660">
    <property type="term" value="F:flavin adenine dinucleotide binding"/>
    <property type="evidence" value="ECO:0007669"/>
    <property type="project" value="UniProtKB-UniRule"/>
</dbReference>
<dbReference type="GO" id="GO:0050661">
    <property type="term" value="F:NADP binding"/>
    <property type="evidence" value="ECO:0007669"/>
    <property type="project" value="UniProtKB-UniRule"/>
</dbReference>
<dbReference type="Gene3D" id="3.50.50.60">
    <property type="entry name" value="FAD/NAD(P)-binding domain"/>
    <property type="match status" value="2"/>
</dbReference>
<dbReference type="HAMAP" id="MF_01685">
    <property type="entry name" value="FENR2"/>
    <property type="match status" value="1"/>
</dbReference>
<dbReference type="InterPro" id="IPR036188">
    <property type="entry name" value="FAD/NAD-bd_sf"/>
</dbReference>
<dbReference type="InterPro" id="IPR023753">
    <property type="entry name" value="FAD/NAD-binding_dom"/>
</dbReference>
<dbReference type="InterPro" id="IPR022890">
    <property type="entry name" value="Fd--NADP_Rdtase_type_2"/>
</dbReference>
<dbReference type="InterPro" id="IPR050097">
    <property type="entry name" value="Ferredoxin-NADP_redctase_2"/>
</dbReference>
<dbReference type="PANTHER" id="PTHR48105">
    <property type="entry name" value="THIOREDOXIN REDUCTASE 1-RELATED-RELATED"/>
    <property type="match status" value="1"/>
</dbReference>
<dbReference type="Pfam" id="PF07992">
    <property type="entry name" value="Pyr_redox_2"/>
    <property type="match status" value="1"/>
</dbReference>
<dbReference type="PRINTS" id="PR00368">
    <property type="entry name" value="FADPNR"/>
</dbReference>
<dbReference type="PRINTS" id="PR00469">
    <property type="entry name" value="PNDRDTASEII"/>
</dbReference>
<dbReference type="SUPFAM" id="SSF51905">
    <property type="entry name" value="FAD/NAD(P)-binding domain"/>
    <property type="match status" value="2"/>
</dbReference>
<evidence type="ECO:0000255" key="1">
    <source>
        <dbReference type="HAMAP-Rule" id="MF_01685"/>
    </source>
</evidence>
<protein>
    <recommendedName>
        <fullName evidence="1">Ferredoxin--NADP reductase</fullName>
        <shortName evidence="1">FNR</shortName>
        <shortName evidence="1">Fd-NADP(+) reductase</shortName>
        <ecNumber evidence="1">1.18.1.2</ecNumber>
    </recommendedName>
</protein>
<accession>A1VQ12</accession>
<sequence length="366" mass="39881">MEPQLNQEVINTAALHDGPIETDAVIVGAGPVGLFQVFELGLLEIKAHIIDSLAYPGGQPIELYPDKPIYDIPAIPVCTGKELTDNLMKQIEPFGPTFHLGQEVSVLEKQEDGRFFVETSKGTKFLTKTIFIAAGVGAFQPKLLRVDGLDKFDNSQLFYRVKNPADFAGKNLIIVGGGDSALDWALNFVAEGPNKAESVILIHRRDGFKAAPANVAKMKELCDAYEMQFIIGQVTGYDEKEGRLTAAKVTGADGITRVVPLDVMLVFFGLSPKLGPIAHWGLDIERKQIKVDTEKFSTNIPGIFAVGDINTYPGKKKLILSGFHECALAAFGAAPFIFPDKKIHLQYTTTSPKLHKVLGVESPVFD</sequence>
<reference key="1">
    <citation type="journal article" date="2009" name="Environ. Microbiol.">
        <title>The genome of Polaromonas naphthalenivorans strain CJ2, isolated from coal tar-contaminated sediment, reveals physiological and metabolic versatility and evolution through extensive horizontal gene transfer.</title>
        <authorList>
            <person name="Yagi J.M."/>
            <person name="Sims D."/>
            <person name="Brettin T."/>
            <person name="Bruce D."/>
            <person name="Madsen E.L."/>
        </authorList>
    </citation>
    <scope>NUCLEOTIDE SEQUENCE [LARGE SCALE GENOMIC DNA]</scope>
    <source>
        <strain>CJ2</strain>
    </source>
</reference>
<proteinExistence type="inferred from homology"/>
<organism>
    <name type="scientific">Polaromonas naphthalenivorans (strain CJ2)</name>
    <dbReference type="NCBI Taxonomy" id="365044"/>
    <lineage>
        <taxon>Bacteria</taxon>
        <taxon>Pseudomonadati</taxon>
        <taxon>Pseudomonadota</taxon>
        <taxon>Betaproteobacteria</taxon>
        <taxon>Burkholderiales</taxon>
        <taxon>Comamonadaceae</taxon>
        <taxon>Polaromonas</taxon>
    </lineage>
</organism>
<name>FENR_POLNA</name>
<gene>
    <name type="ordered locus">Pnap_2433</name>
</gene>
<comment type="catalytic activity">
    <reaction evidence="1">
        <text>2 reduced [2Fe-2S]-[ferredoxin] + NADP(+) + H(+) = 2 oxidized [2Fe-2S]-[ferredoxin] + NADPH</text>
        <dbReference type="Rhea" id="RHEA:20125"/>
        <dbReference type="Rhea" id="RHEA-COMP:10000"/>
        <dbReference type="Rhea" id="RHEA-COMP:10001"/>
        <dbReference type="ChEBI" id="CHEBI:15378"/>
        <dbReference type="ChEBI" id="CHEBI:33737"/>
        <dbReference type="ChEBI" id="CHEBI:33738"/>
        <dbReference type="ChEBI" id="CHEBI:57783"/>
        <dbReference type="ChEBI" id="CHEBI:58349"/>
        <dbReference type="EC" id="1.18.1.2"/>
    </reaction>
</comment>
<comment type="cofactor">
    <cofactor evidence="1">
        <name>FAD</name>
        <dbReference type="ChEBI" id="CHEBI:57692"/>
    </cofactor>
    <text evidence="1">Binds 1 FAD per subunit.</text>
</comment>
<comment type="subunit">
    <text evidence="1">Homodimer.</text>
</comment>
<comment type="similarity">
    <text evidence="1">Belongs to the ferredoxin--NADP reductase type 2 family.</text>
</comment>